<name>IF4A9_TOBAC</name>
<protein>
    <recommendedName>
        <fullName>Eukaryotic initiation factor 4A-9</fullName>
        <shortName>eIF-4A-9</shortName>
        <ecNumber>3.6.4.13</ecNumber>
    </recommendedName>
    <alternativeName>
        <fullName>ATP-dependent RNA helicase eIF4A-9</fullName>
    </alternativeName>
</protein>
<accession>Q40471</accession>
<comment type="function">
    <text evidence="1">ATP-dependent RNA helicase which is a subunit of the eIF4F complex involved in cap recognition and is required for mRNA binding to ribosome. In the current model of translation initiation, eIF4A unwinds RNA secondary structures in the 5'-UTR of mRNAs which is necessary to allow efficient binding of the small ribosomal subunit, and subsequent scanning for the initiator codon (By similarity).</text>
</comment>
<comment type="catalytic activity">
    <reaction>
        <text>ATP + H2O = ADP + phosphate + H(+)</text>
        <dbReference type="Rhea" id="RHEA:13065"/>
        <dbReference type="ChEBI" id="CHEBI:15377"/>
        <dbReference type="ChEBI" id="CHEBI:15378"/>
        <dbReference type="ChEBI" id="CHEBI:30616"/>
        <dbReference type="ChEBI" id="CHEBI:43474"/>
        <dbReference type="ChEBI" id="CHEBI:456216"/>
        <dbReference type="EC" id="3.6.4.13"/>
    </reaction>
</comment>
<comment type="subunit">
    <text evidence="1">eIF4F is a multi-subunit complex, the composition of which varies with external and internal environmental conditions. It is composed of at least EIF4A, EIF4E and EIF4G (By similarity).</text>
</comment>
<comment type="similarity">
    <text evidence="4">Belongs to the DEAD box helicase family. eIF4A subfamily.</text>
</comment>
<reference key="1">
    <citation type="journal article" date="1994" name="Plant Mol. Biol.">
        <title>Characterization of the tobacco eIF-4A gene family.</title>
        <authorList>
            <person name="Owttrim G.W."/>
            <person name="Mandel T."/>
            <person name="Trachsel H."/>
            <person name="Thomas A.A."/>
            <person name="Kuhlemeier C."/>
        </authorList>
    </citation>
    <scope>NUCLEOTIDE SEQUENCE [MRNA]</scope>
    <source>
        <strain>cv. SR1</strain>
    </source>
</reference>
<proteinExistence type="evidence at transcript level"/>
<dbReference type="EC" id="3.6.4.13"/>
<dbReference type="EMBL" id="X79135">
    <property type="protein sequence ID" value="CAA55736.1"/>
    <property type="molecule type" value="mRNA"/>
</dbReference>
<dbReference type="PIR" id="S52017">
    <property type="entry name" value="S52017"/>
</dbReference>
<dbReference type="RefSeq" id="NP_001312359.1">
    <property type="nucleotide sequence ID" value="NM_001325430.1"/>
</dbReference>
<dbReference type="RefSeq" id="XP_016464153.1">
    <property type="nucleotide sequence ID" value="XM_016608667.1"/>
</dbReference>
<dbReference type="SMR" id="Q40471"/>
<dbReference type="STRING" id="4097.Q40471"/>
<dbReference type="PaxDb" id="4097-Q40471"/>
<dbReference type="GeneID" id="107787142"/>
<dbReference type="KEGG" id="nta:107787142"/>
<dbReference type="OMA" id="ERISQYY"/>
<dbReference type="OrthoDB" id="10265785at2759"/>
<dbReference type="Proteomes" id="UP000084051">
    <property type="component" value="Unplaced"/>
</dbReference>
<dbReference type="GO" id="GO:0010494">
    <property type="term" value="C:cytoplasmic stress granule"/>
    <property type="evidence" value="ECO:0000318"/>
    <property type="project" value="GO_Central"/>
</dbReference>
<dbReference type="GO" id="GO:0005524">
    <property type="term" value="F:ATP binding"/>
    <property type="evidence" value="ECO:0007669"/>
    <property type="project" value="UniProtKB-KW"/>
</dbReference>
<dbReference type="GO" id="GO:0016887">
    <property type="term" value="F:ATP hydrolysis activity"/>
    <property type="evidence" value="ECO:0007669"/>
    <property type="project" value="RHEA"/>
</dbReference>
<dbReference type="GO" id="GO:0003723">
    <property type="term" value="F:RNA binding"/>
    <property type="evidence" value="ECO:0007669"/>
    <property type="project" value="UniProtKB-KW"/>
</dbReference>
<dbReference type="GO" id="GO:0003724">
    <property type="term" value="F:RNA helicase activity"/>
    <property type="evidence" value="ECO:0007669"/>
    <property type="project" value="UniProtKB-EC"/>
</dbReference>
<dbReference type="GO" id="GO:0003743">
    <property type="term" value="F:translation initiation factor activity"/>
    <property type="evidence" value="ECO:0000318"/>
    <property type="project" value="GO_Central"/>
</dbReference>
<dbReference type="GO" id="GO:0002183">
    <property type="term" value="P:cytoplasmic translational initiation"/>
    <property type="evidence" value="ECO:0000318"/>
    <property type="project" value="GO_Central"/>
</dbReference>
<dbReference type="CDD" id="cd17939">
    <property type="entry name" value="DEADc_EIF4A"/>
    <property type="match status" value="1"/>
</dbReference>
<dbReference type="CDD" id="cd18787">
    <property type="entry name" value="SF2_C_DEAD"/>
    <property type="match status" value="1"/>
</dbReference>
<dbReference type="FunFam" id="3.40.50.300:FF:000089">
    <property type="entry name" value="Eukaryotic initiation factor 4A-II"/>
    <property type="match status" value="1"/>
</dbReference>
<dbReference type="FunFam" id="3.40.50.300:FF:000031">
    <property type="entry name" value="Eukaryotic initiation factor 4A-III"/>
    <property type="match status" value="1"/>
</dbReference>
<dbReference type="Gene3D" id="3.40.50.300">
    <property type="entry name" value="P-loop containing nucleotide triphosphate hydrolases"/>
    <property type="match status" value="2"/>
</dbReference>
<dbReference type="InterPro" id="IPR011545">
    <property type="entry name" value="DEAD/DEAH_box_helicase_dom"/>
</dbReference>
<dbReference type="InterPro" id="IPR014001">
    <property type="entry name" value="Helicase_ATP-bd"/>
</dbReference>
<dbReference type="InterPro" id="IPR001650">
    <property type="entry name" value="Helicase_C-like"/>
</dbReference>
<dbReference type="InterPro" id="IPR027417">
    <property type="entry name" value="P-loop_NTPase"/>
</dbReference>
<dbReference type="InterPro" id="IPR000629">
    <property type="entry name" value="RNA-helicase_DEAD-box_CS"/>
</dbReference>
<dbReference type="InterPro" id="IPR014014">
    <property type="entry name" value="RNA_helicase_DEAD_Q_motif"/>
</dbReference>
<dbReference type="PANTHER" id="PTHR47958">
    <property type="entry name" value="ATP-DEPENDENT RNA HELICASE DBP3"/>
    <property type="match status" value="1"/>
</dbReference>
<dbReference type="Pfam" id="PF00270">
    <property type="entry name" value="DEAD"/>
    <property type="match status" value="1"/>
</dbReference>
<dbReference type="Pfam" id="PF00271">
    <property type="entry name" value="Helicase_C"/>
    <property type="match status" value="1"/>
</dbReference>
<dbReference type="SMART" id="SM00487">
    <property type="entry name" value="DEXDc"/>
    <property type="match status" value="1"/>
</dbReference>
<dbReference type="SMART" id="SM00490">
    <property type="entry name" value="HELICc"/>
    <property type="match status" value="1"/>
</dbReference>
<dbReference type="SUPFAM" id="SSF52540">
    <property type="entry name" value="P-loop containing nucleoside triphosphate hydrolases"/>
    <property type="match status" value="1"/>
</dbReference>
<dbReference type="PROSITE" id="PS00039">
    <property type="entry name" value="DEAD_ATP_HELICASE"/>
    <property type="match status" value="1"/>
</dbReference>
<dbReference type="PROSITE" id="PS51192">
    <property type="entry name" value="HELICASE_ATP_BIND_1"/>
    <property type="match status" value="1"/>
</dbReference>
<dbReference type="PROSITE" id="PS51194">
    <property type="entry name" value="HELICASE_CTER"/>
    <property type="match status" value="1"/>
</dbReference>
<dbReference type="PROSITE" id="PS51195">
    <property type="entry name" value="Q_MOTIF"/>
    <property type="match status" value="1"/>
</dbReference>
<keyword id="KW-0067">ATP-binding</keyword>
<keyword id="KW-0347">Helicase</keyword>
<keyword id="KW-0378">Hydrolase</keyword>
<keyword id="KW-0396">Initiation factor</keyword>
<keyword id="KW-0547">Nucleotide-binding</keyword>
<keyword id="KW-0648">Protein biosynthesis</keyword>
<keyword id="KW-1185">Reference proteome</keyword>
<keyword id="KW-0694">RNA-binding</keyword>
<organism>
    <name type="scientific">Nicotiana tabacum</name>
    <name type="common">Common tobacco</name>
    <dbReference type="NCBI Taxonomy" id="4097"/>
    <lineage>
        <taxon>Eukaryota</taxon>
        <taxon>Viridiplantae</taxon>
        <taxon>Streptophyta</taxon>
        <taxon>Embryophyta</taxon>
        <taxon>Tracheophyta</taxon>
        <taxon>Spermatophyta</taxon>
        <taxon>Magnoliopsida</taxon>
        <taxon>eudicotyledons</taxon>
        <taxon>Gunneridae</taxon>
        <taxon>Pentapetalae</taxon>
        <taxon>asterids</taxon>
        <taxon>lamiids</taxon>
        <taxon>Solanales</taxon>
        <taxon>Solanaceae</taxon>
        <taxon>Nicotianoideae</taxon>
        <taxon>Nicotianeae</taxon>
        <taxon>Nicotiana</taxon>
    </lineage>
</organism>
<sequence>MAGAAPEGSQFDARQYDSKMTELLNAEGQDFFTSYDEVYHSFDAMGLKENLLRGIYAYGFEKPSAIQQRGIVPFCKGLDVIQQAQSGTGKTATFCSGILQQLDYELLDCQALVLAPTRELAQQIEKVMRALGDYLGVKVHACVGGTSVREDQRILSSGVHVVVGTPGRVFDMLRRQSLRPDHIKMFVLDEADEMLSRGFKDQIYDIFQLLPPKIQVGVFSATMPPEALEITRKFMNKPVRILVKRDELTLEGIKQFYVNVDKEEWKLETLCDLYETLAITQSVIFVNTRRKVDWLTDKMRSRDHTVSATHGDMDQNTRDIIMREFRSGSSRVLITTDLLARGIDVQQVSLVINYDLPTQPENYLHRIGRSGRFGRKGVSINFVTSDDERMLSDIQRFYNVVIEELPANVADLL</sequence>
<evidence type="ECO:0000250" key="1"/>
<evidence type="ECO:0000255" key="2">
    <source>
        <dbReference type="PROSITE-ProRule" id="PRU00541"/>
    </source>
</evidence>
<evidence type="ECO:0000255" key="3">
    <source>
        <dbReference type="PROSITE-ProRule" id="PRU00542"/>
    </source>
</evidence>
<evidence type="ECO:0000305" key="4"/>
<feature type="chain" id="PRO_0000054956" description="Eukaryotic initiation factor 4A-9">
    <location>
        <begin position="1"/>
        <end position="413"/>
    </location>
</feature>
<feature type="domain" description="Helicase ATP-binding" evidence="2">
    <location>
        <begin position="71"/>
        <end position="241"/>
    </location>
</feature>
<feature type="domain" description="Helicase C-terminal" evidence="3">
    <location>
        <begin position="252"/>
        <end position="413"/>
    </location>
</feature>
<feature type="short sequence motif" description="Q motif">
    <location>
        <begin position="40"/>
        <end position="68"/>
    </location>
</feature>
<feature type="short sequence motif" description="DEAD box">
    <location>
        <begin position="189"/>
        <end position="192"/>
    </location>
</feature>
<feature type="binding site" evidence="2">
    <location>
        <begin position="84"/>
        <end position="91"/>
    </location>
    <ligand>
        <name>ATP</name>
        <dbReference type="ChEBI" id="CHEBI:30616"/>
    </ligand>
</feature>